<reference key="1">
    <citation type="journal article" date="2005" name="J. Bacteriol.">
        <title>Insights on evolution of virulence and resistance from the complete genome analysis of an early methicillin-resistant Staphylococcus aureus strain and a biofilm-producing methicillin-resistant Staphylococcus epidermidis strain.</title>
        <authorList>
            <person name="Gill S.R."/>
            <person name="Fouts D.E."/>
            <person name="Archer G.L."/>
            <person name="Mongodin E.F."/>
            <person name="DeBoy R.T."/>
            <person name="Ravel J."/>
            <person name="Paulsen I.T."/>
            <person name="Kolonay J.F."/>
            <person name="Brinkac L.M."/>
            <person name="Beanan M.J."/>
            <person name="Dodson R.J."/>
            <person name="Daugherty S.C."/>
            <person name="Madupu R."/>
            <person name="Angiuoli S.V."/>
            <person name="Durkin A.S."/>
            <person name="Haft D.H."/>
            <person name="Vamathevan J.J."/>
            <person name="Khouri H."/>
            <person name="Utterback T.R."/>
            <person name="Lee C."/>
            <person name="Dimitrov G."/>
            <person name="Jiang L."/>
            <person name="Qin H."/>
            <person name="Weidman J."/>
            <person name="Tran K."/>
            <person name="Kang K.H."/>
            <person name="Hance I.R."/>
            <person name="Nelson K.E."/>
            <person name="Fraser C.M."/>
        </authorList>
    </citation>
    <scope>NUCLEOTIDE SEQUENCE [LARGE SCALE GENOMIC DNA]</scope>
    <source>
        <strain>COL</strain>
    </source>
</reference>
<name>PUR8_STAAC</name>
<feature type="chain" id="PRO_0000259974" description="Adenylosuccinate lyase">
    <location>
        <begin position="1"/>
        <end position="431"/>
    </location>
</feature>
<feature type="active site" description="Proton donor/acceptor" evidence="2">
    <location>
        <position position="141"/>
    </location>
</feature>
<feature type="active site" description="Proton donor/acceptor" evidence="2">
    <location>
        <position position="262"/>
    </location>
</feature>
<feature type="binding site" evidence="2">
    <location>
        <begin position="4"/>
        <end position="5"/>
    </location>
    <ligand>
        <name>N(6)-(1,2-dicarboxyethyl)-AMP</name>
        <dbReference type="ChEBI" id="CHEBI:57567"/>
    </ligand>
</feature>
<feature type="binding site" evidence="2">
    <location>
        <begin position="67"/>
        <end position="69"/>
    </location>
    <ligand>
        <name>N(6)-(1,2-dicarboxyethyl)-AMP</name>
        <dbReference type="ChEBI" id="CHEBI:57567"/>
    </ligand>
</feature>
<feature type="binding site" evidence="2">
    <location>
        <begin position="93"/>
        <end position="94"/>
    </location>
    <ligand>
        <name>N(6)-(1,2-dicarboxyethyl)-AMP</name>
        <dbReference type="ChEBI" id="CHEBI:57567"/>
    </ligand>
</feature>
<feature type="binding site" evidence="2">
    <location>
        <position position="212"/>
    </location>
    <ligand>
        <name>N(6)-(1,2-dicarboxyethyl)-AMP</name>
        <dbReference type="ChEBI" id="CHEBI:57567"/>
    </ligand>
</feature>
<feature type="binding site" evidence="2">
    <location>
        <position position="263"/>
    </location>
    <ligand>
        <name>N(6)-(1,2-dicarboxyethyl)-AMP</name>
        <dbReference type="ChEBI" id="CHEBI:57567"/>
    </ligand>
</feature>
<feature type="binding site" evidence="2">
    <location>
        <begin position="268"/>
        <end position="270"/>
    </location>
    <ligand>
        <name>N(6)-(1,2-dicarboxyethyl)-AMP</name>
        <dbReference type="ChEBI" id="CHEBI:57567"/>
    </ligand>
</feature>
<feature type="binding site" evidence="2">
    <location>
        <position position="276"/>
    </location>
    <ligand>
        <name>N(6)-(1,2-dicarboxyethyl)-AMP</name>
        <dbReference type="ChEBI" id="CHEBI:57567"/>
    </ligand>
</feature>
<feature type="binding site" evidence="2">
    <location>
        <begin position="307"/>
        <end position="311"/>
    </location>
    <ligand>
        <name>N(6)-(1,2-dicarboxyethyl)-AMP</name>
        <dbReference type="ChEBI" id="CHEBI:57567"/>
    </ligand>
</feature>
<evidence type="ECO:0000250" key="1"/>
<evidence type="ECO:0000250" key="2">
    <source>
        <dbReference type="UniProtKB" id="P0AB89"/>
    </source>
</evidence>
<evidence type="ECO:0000305" key="3"/>
<comment type="function">
    <text evidence="2">Catalyzes two reactions in de novo purine nucleotide biosynthesis. Catalyzes the breakdown of 5-aminoimidazole- (N-succinylocarboxamide) ribotide (SAICAR or 2-[5-amino-1-(5-phospho-beta-D-ribosyl)imidazole-4-carboxamido]succinate) to 5-aminoimidazole-4-carboxamide ribotide (AICAR or 5-amino-1-(5-phospho-beta-D-ribosyl)imidazole-4-carboxamide) and fumarate, and of adenylosuccinate (ADS or N(6)-(1,2-dicarboxyethyl)-AMP) to adenosine monophosphate (AMP) and fumarate.</text>
</comment>
<comment type="catalytic activity">
    <reaction evidence="2">
        <text>N(6)-(1,2-dicarboxyethyl)-AMP = fumarate + AMP</text>
        <dbReference type="Rhea" id="RHEA:16853"/>
        <dbReference type="ChEBI" id="CHEBI:29806"/>
        <dbReference type="ChEBI" id="CHEBI:57567"/>
        <dbReference type="ChEBI" id="CHEBI:456215"/>
        <dbReference type="EC" id="4.3.2.2"/>
    </reaction>
    <physiologicalReaction direction="left-to-right" evidence="2">
        <dbReference type="Rhea" id="RHEA:16854"/>
    </physiologicalReaction>
</comment>
<comment type="catalytic activity">
    <reaction evidence="2">
        <text>(2S)-2-[5-amino-1-(5-phospho-beta-D-ribosyl)imidazole-4-carboxamido]succinate = 5-amino-1-(5-phospho-beta-D-ribosyl)imidazole-4-carboxamide + fumarate</text>
        <dbReference type="Rhea" id="RHEA:23920"/>
        <dbReference type="ChEBI" id="CHEBI:29806"/>
        <dbReference type="ChEBI" id="CHEBI:58443"/>
        <dbReference type="ChEBI" id="CHEBI:58475"/>
        <dbReference type="EC" id="4.3.2.2"/>
    </reaction>
    <physiologicalReaction direction="left-to-right" evidence="2">
        <dbReference type="Rhea" id="RHEA:23921"/>
    </physiologicalReaction>
</comment>
<comment type="pathway">
    <text>Purine metabolism; AMP biosynthesis via de novo pathway; AMP from IMP: step 2/2.</text>
</comment>
<comment type="pathway">
    <text>Purine metabolism; IMP biosynthesis via de novo pathway; 5-amino-1-(5-phospho-D-ribosyl)imidazole-4-carboxamide from 5-amino-1-(5-phospho-D-ribosyl)imidazole-4-carboxylate: step 2/2.</text>
</comment>
<comment type="subunit">
    <text evidence="1">Homodimer and homotetramer. Residues from neighboring subunits contribute catalytic and substrate-binding residues to each active site (By similarity).</text>
</comment>
<comment type="similarity">
    <text evidence="3">Belongs to the lyase 1 family. Adenylosuccinate lyase subfamily.</text>
</comment>
<sequence>MIERYSREEMSNIWTDQNRYEAWLEVEILACEAWSELGHIPKADVQKIRQNAKVNVERAQEIEQETRHDVVAFTRQVSETLGEERKWVHYGLTSTDVVDTALSFVIKQANDIIEKDLERFIDVLAEKAKNYKYTLMMGRTHGVHAEPTTFGVKMALWYTEMQRNLQRFKQVREEIEVGKMSGAVGTFANIPPEIESYVCKHLGIGTAPVSTQTLQRDRHAYYIATLALIATSLEKFAVEIRNLQKTETREVEEAFAKGQKGSSAMPHKRNPIGSENITGISRVIRGYITTAYENVPLWHERDISHSSAERIMLPDVTIALDYALNRFTNIVDRLTVFEDNMRNNIDKTFGLIFSQRVLLALINKGMVREEAYDKVQPKAMISWETKTPFRELIEQDESITSVLTKEELDECFDPKHHLNQVDTIFERAGLA</sequence>
<accession>Q5HEL4</accession>
<dbReference type="EC" id="4.3.2.2" evidence="2"/>
<dbReference type="EMBL" id="CP000046">
    <property type="protein sequence ID" value="AAW36939.1"/>
    <property type="molecule type" value="Genomic_DNA"/>
</dbReference>
<dbReference type="RefSeq" id="WP_000572878.1">
    <property type="nucleotide sequence ID" value="NZ_JBGOFO010000006.1"/>
</dbReference>
<dbReference type="SMR" id="Q5HEL4"/>
<dbReference type="KEGG" id="sac:SACOL1969"/>
<dbReference type="HOGENOM" id="CLU_030949_0_1_9"/>
<dbReference type="UniPathway" id="UPA00074">
    <property type="reaction ID" value="UER00132"/>
</dbReference>
<dbReference type="UniPathway" id="UPA00075">
    <property type="reaction ID" value="UER00336"/>
</dbReference>
<dbReference type="Proteomes" id="UP000000530">
    <property type="component" value="Chromosome"/>
</dbReference>
<dbReference type="GO" id="GO:0005829">
    <property type="term" value="C:cytosol"/>
    <property type="evidence" value="ECO:0007669"/>
    <property type="project" value="TreeGrafter"/>
</dbReference>
<dbReference type="GO" id="GO:0070626">
    <property type="term" value="F:(S)-2-(5-amino-1-(5-phospho-D-ribosyl)imidazole-4-carboxamido) succinate lyase (fumarate-forming) activity"/>
    <property type="evidence" value="ECO:0007669"/>
    <property type="project" value="TreeGrafter"/>
</dbReference>
<dbReference type="GO" id="GO:0004018">
    <property type="term" value="F:N6-(1,2-dicarboxyethyl)AMP AMP-lyase (fumarate-forming) activity"/>
    <property type="evidence" value="ECO:0007669"/>
    <property type="project" value="InterPro"/>
</dbReference>
<dbReference type="GO" id="GO:0044208">
    <property type="term" value="P:'de novo' AMP biosynthetic process"/>
    <property type="evidence" value="ECO:0007669"/>
    <property type="project" value="UniProtKB-UniPathway"/>
</dbReference>
<dbReference type="GO" id="GO:0006189">
    <property type="term" value="P:'de novo' IMP biosynthetic process"/>
    <property type="evidence" value="ECO:0007669"/>
    <property type="project" value="UniProtKB-UniPathway"/>
</dbReference>
<dbReference type="CDD" id="cd01360">
    <property type="entry name" value="Adenylsuccinate_lyase_1"/>
    <property type="match status" value="1"/>
</dbReference>
<dbReference type="FunFam" id="1.10.275.10:FF:000006">
    <property type="entry name" value="Adenylosuccinate lyase"/>
    <property type="match status" value="1"/>
</dbReference>
<dbReference type="FunFam" id="1.10.40.30:FF:000007">
    <property type="entry name" value="Adenylosuccinate lyase"/>
    <property type="match status" value="1"/>
</dbReference>
<dbReference type="FunFam" id="1.20.200.10:FF:000008">
    <property type="entry name" value="Adenylosuccinate lyase"/>
    <property type="match status" value="1"/>
</dbReference>
<dbReference type="Gene3D" id="1.10.40.30">
    <property type="entry name" value="Fumarase/aspartase (C-terminal domain)"/>
    <property type="match status" value="1"/>
</dbReference>
<dbReference type="Gene3D" id="1.20.200.10">
    <property type="entry name" value="Fumarase/aspartase (Central domain)"/>
    <property type="match status" value="1"/>
</dbReference>
<dbReference type="Gene3D" id="1.10.275.10">
    <property type="entry name" value="Fumarase/aspartase (N-terminal domain)"/>
    <property type="match status" value="1"/>
</dbReference>
<dbReference type="InterPro" id="IPR019468">
    <property type="entry name" value="AdenyloSucc_lyase_C"/>
</dbReference>
<dbReference type="InterPro" id="IPR024083">
    <property type="entry name" value="Fumarase/histidase_N"/>
</dbReference>
<dbReference type="InterPro" id="IPR020557">
    <property type="entry name" value="Fumarate_lyase_CS"/>
</dbReference>
<dbReference type="InterPro" id="IPR000362">
    <property type="entry name" value="Fumarate_lyase_fam"/>
</dbReference>
<dbReference type="InterPro" id="IPR022761">
    <property type="entry name" value="Fumarate_lyase_N"/>
</dbReference>
<dbReference type="InterPro" id="IPR008948">
    <property type="entry name" value="L-Aspartase-like"/>
</dbReference>
<dbReference type="InterPro" id="IPR004769">
    <property type="entry name" value="Pur_lyase"/>
</dbReference>
<dbReference type="NCBIfam" id="TIGR00928">
    <property type="entry name" value="purB"/>
    <property type="match status" value="1"/>
</dbReference>
<dbReference type="PANTHER" id="PTHR43172">
    <property type="entry name" value="ADENYLOSUCCINATE LYASE"/>
    <property type="match status" value="1"/>
</dbReference>
<dbReference type="PANTHER" id="PTHR43172:SF1">
    <property type="entry name" value="ADENYLOSUCCINATE LYASE"/>
    <property type="match status" value="1"/>
</dbReference>
<dbReference type="Pfam" id="PF10397">
    <property type="entry name" value="ADSL_C"/>
    <property type="match status" value="1"/>
</dbReference>
<dbReference type="Pfam" id="PF00206">
    <property type="entry name" value="Lyase_1"/>
    <property type="match status" value="1"/>
</dbReference>
<dbReference type="PRINTS" id="PR00145">
    <property type="entry name" value="ARGSUCLYASE"/>
</dbReference>
<dbReference type="PRINTS" id="PR00149">
    <property type="entry name" value="FUMRATELYASE"/>
</dbReference>
<dbReference type="SMART" id="SM00998">
    <property type="entry name" value="ADSL_C"/>
    <property type="match status" value="1"/>
</dbReference>
<dbReference type="SUPFAM" id="SSF48557">
    <property type="entry name" value="L-aspartase-like"/>
    <property type="match status" value="1"/>
</dbReference>
<dbReference type="PROSITE" id="PS00163">
    <property type="entry name" value="FUMARATE_LYASES"/>
    <property type="match status" value="1"/>
</dbReference>
<organism>
    <name type="scientific">Staphylococcus aureus (strain COL)</name>
    <dbReference type="NCBI Taxonomy" id="93062"/>
    <lineage>
        <taxon>Bacteria</taxon>
        <taxon>Bacillati</taxon>
        <taxon>Bacillota</taxon>
        <taxon>Bacilli</taxon>
        <taxon>Bacillales</taxon>
        <taxon>Staphylococcaceae</taxon>
        <taxon>Staphylococcus</taxon>
    </lineage>
</organism>
<proteinExistence type="inferred from homology"/>
<keyword id="KW-0456">Lyase</keyword>
<keyword id="KW-0658">Purine biosynthesis</keyword>
<protein>
    <recommendedName>
        <fullName>Adenylosuccinate lyase</fullName>
        <shortName>ASL</shortName>
        <ecNumber evidence="2">4.3.2.2</ecNumber>
    </recommendedName>
    <alternativeName>
        <fullName>Adenylosuccinase</fullName>
        <shortName>ASase</shortName>
    </alternativeName>
</protein>
<gene>
    <name type="primary">purB</name>
    <name type="ordered locus">SACOL1969</name>
</gene>